<evidence type="ECO:0000250" key="1"/>
<accession>Q6DSS2</accession>
<gene>
    <name type="ordered locus">At2g31862</name>
    <name type="ORF">F20M17</name>
</gene>
<reference key="1">
    <citation type="journal article" date="1999" name="Nature">
        <title>Sequence and analysis of chromosome 2 of the plant Arabidopsis thaliana.</title>
        <authorList>
            <person name="Lin X."/>
            <person name="Kaul S."/>
            <person name="Rounsley S.D."/>
            <person name="Shea T.P."/>
            <person name="Benito M.-I."/>
            <person name="Town C.D."/>
            <person name="Fujii C.Y."/>
            <person name="Mason T.M."/>
            <person name="Bowman C.L."/>
            <person name="Barnstead M.E."/>
            <person name="Feldblyum T.V."/>
            <person name="Buell C.R."/>
            <person name="Ketchum K.A."/>
            <person name="Lee J.J."/>
            <person name="Ronning C.M."/>
            <person name="Koo H.L."/>
            <person name="Moffat K.S."/>
            <person name="Cronin L.A."/>
            <person name="Shen M."/>
            <person name="Pai G."/>
            <person name="Van Aken S."/>
            <person name="Umayam L."/>
            <person name="Tallon L.J."/>
            <person name="Gill J.E."/>
            <person name="Adams M.D."/>
            <person name="Carrera A.J."/>
            <person name="Creasy T.H."/>
            <person name="Goodman H.M."/>
            <person name="Somerville C.R."/>
            <person name="Copenhaver G.P."/>
            <person name="Preuss D."/>
            <person name="Nierman W.C."/>
            <person name="White O."/>
            <person name="Eisen J.A."/>
            <person name="Salzberg S.L."/>
            <person name="Fraser C.M."/>
            <person name="Venter J.C."/>
        </authorList>
    </citation>
    <scope>NUCLEOTIDE SEQUENCE [LARGE SCALE GENOMIC DNA]</scope>
    <source>
        <strain>cv. Columbia</strain>
    </source>
</reference>
<reference key="2">
    <citation type="journal article" date="2017" name="Plant J.">
        <title>Araport11: a complete reannotation of the Arabidopsis thaliana reference genome.</title>
        <authorList>
            <person name="Cheng C.Y."/>
            <person name="Krishnakumar V."/>
            <person name="Chan A.P."/>
            <person name="Thibaud-Nissen F."/>
            <person name="Schobel S."/>
            <person name="Town C.D."/>
        </authorList>
    </citation>
    <scope>GENOME REANNOTATION</scope>
    <source>
        <strain>cv. Columbia</strain>
    </source>
</reference>
<reference key="3">
    <citation type="submission" date="2004-06" db="EMBL/GenBank/DDBJ databases">
        <title>Reconstruction of cDNA sequences for hypothetical genes in Arabidopsis thaliana from 5' and 3' RACE products.</title>
        <authorList>
            <person name="Xiao Y.-L."/>
            <person name="Underwood B.A."/>
            <person name="Moskal W.A. Jr."/>
            <person name="Torian U."/>
            <person name="Redman J.C."/>
            <person name="Wu H.C."/>
            <person name="Utterback T."/>
            <person name="Town C.D."/>
        </authorList>
    </citation>
    <scope>NUCLEOTIDE SEQUENCE [LARGE SCALE MRNA]</scope>
    <source>
        <strain>cv. Columbia</strain>
    </source>
</reference>
<reference key="4">
    <citation type="submission" date="2004-10" db="EMBL/GenBank/DDBJ databases">
        <authorList>
            <person name="Underwood B.A."/>
            <person name="Xiao Y.-L."/>
            <person name="Moskal W.A. Jr."/>
            <person name="Monaghan E.L."/>
            <person name="Wang W."/>
            <person name="Redman J.C."/>
            <person name="Wu H.C."/>
            <person name="Utterback T."/>
            <person name="Town C.D."/>
        </authorList>
    </citation>
    <scope>NUCLEOTIDE SEQUENCE [LARGE SCALE GENOMIC DNA]</scope>
    <source>
        <strain>cv. Columbia</strain>
    </source>
</reference>
<reference key="5">
    <citation type="journal article" date="2008" name="Trends Plant Sci.">
        <title>The plant B3 superfamily.</title>
        <authorList>
            <person name="Swaminathan K."/>
            <person name="Peterson K."/>
            <person name="Jack T."/>
        </authorList>
    </citation>
    <scope>GENE FAMILY</scope>
</reference>
<organism>
    <name type="scientific">Arabidopsis thaliana</name>
    <name type="common">Mouse-ear cress</name>
    <dbReference type="NCBI Taxonomy" id="3702"/>
    <lineage>
        <taxon>Eukaryota</taxon>
        <taxon>Viridiplantae</taxon>
        <taxon>Streptophyta</taxon>
        <taxon>Embryophyta</taxon>
        <taxon>Tracheophyta</taxon>
        <taxon>Spermatophyta</taxon>
        <taxon>Magnoliopsida</taxon>
        <taxon>eudicotyledons</taxon>
        <taxon>Gunneridae</taxon>
        <taxon>Pentapetalae</taxon>
        <taxon>rosids</taxon>
        <taxon>malvids</taxon>
        <taxon>Brassicales</taxon>
        <taxon>Brassicaceae</taxon>
        <taxon>Camelineae</taxon>
        <taxon>Arabidopsis</taxon>
    </lineage>
</organism>
<keyword id="KW-0238">DNA-binding</keyword>
<keyword id="KW-0539">Nucleus</keyword>
<keyword id="KW-1185">Reference proteome</keyword>
<keyword id="KW-0804">Transcription</keyword>
<keyword id="KW-0805">Transcription regulation</keyword>
<sequence>MWVNLSCMCHIVDKLLELNLRRWNMRSTSIYVLASRWKKVVSDNTLIEGQRIRLWSFHSLAKLYIALVPLDPAPAPTLAILLAPAPTPSSPPVVTRDSDELYISHADAQEEGDRILPVHADNDWECLNLLAKVSEETTCLEVSQEANRRSSLVSDTELDLELRLSLPGKNSYVM</sequence>
<name>Y2186_ARATH</name>
<comment type="subcellular location">
    <subcellularLocation>
        <location evidence="1">Nucleus</location>
    </subcellularLocation>
</comment>
<feature type="chain" id="PRO_0000412850" description="B3 domain-containing protein At2g31862">
    <location>
        <begin position="1"/>
        <end position="174"/>
    </location>
</feature>
<feature type="DNA-binding region" description="TF-B3">
    <location>
        <begin position="1"/>
        <end position="71"/>
    </location>
</feature>
<proteinExistence type="evidence at transcript level"/>
<dbReference type="EMBL" id="AC006533">
    <property type="status" value="NOT_ANNOTATED_CDS"/>
    <property type="molecule type" value="Genomic_DNA"/>
</dbReference>
<dbReference type="EMBL" id="CP002685">
    <property type="protein sequence ID" value="AEC08594.1"/>
    <property type="molecule type" value="Genomic_DNA"/>
</dbReference>
<dbReference type="EMBL" id="AY648326">
    <property type="protein sequence ID" value="AAT68737.1"/>
    <property type="molecule type" value="mRNA"/>
</dbReference>
<dbReference type="EMBL" id="AY773856">
    <property type="protein sequence ID" value="AAV63885.1"/>
    <property type="molecule type" value="Genomic_DNA"/>
</dbReference>
<dbReference type="RefSeq" id="NP_973577.1">
    <property type="nucleotide sequence ID" value="NM_201848.2"/>
</dbReference>
<dbReference type="BioGRID" id="30185">
    <property type="interactions" value="1"/>
</dbReference>
<dbReference type="FunCoup" id="Q6DSS2">
    <property type="interactions" value="10"/>
</dbReference>
<dbReference type="IntAct" id="Q6DSS2">
    <property type="interactions" value="1"/>
</dbReference>
<dbReference type="GlyGen" id="Q6DSS2">
    <property type="glycosylation" value="1 site"/>
</dbReference>
<dbReference type="PaxDb" id="3702-AT2G31862.1"/>
<dbReference type="EnsemblPlants" id="AT2G31862.1">
    <property type="protein sequence ID" value="AT2G31862.1"/>
    <property type="gene ID" value="AT2G31862"/>
</dbReference>
<dbReference type="GeneID" id="2745575"/>
<dbReference type="Gramene" id="AT2G31862.1">
    <property type="protein sequence ID" value="AT2G31862.1"/>
    <property type="gene ID" value="AT2G31862"/>
</dbReference>
<dbReference type="KEGG" id="ath:AT2G31862"/>
<dbReference type="Araport" id="AT2G31862"/>
<dbReference type="TAIR" id="AT2G31862"/>
<dbReference type="HOGENOM" id="CLU_1542174_0_0_1"/>
<dbReference type="InParanoid" id="Q6DSS2"/>
<dbReference type="OrthoDB" id="1068833at2759"/>
<dbReference type="PhylomeDB" id="Q6DSS2"/>
<dbReference type="PRO" id="PR:Q6DSS2"/>
<dbReference type="Proteomes" id="UP000006548">
    <property type="component" value="Chromosome 2"/>
</dbReference>
<dbReference type="GO" id="GO:0005634">
    <property type="term" value="C:nucleus"/>
    <property type="evidence" value="ECO:0007669"/>
    <property type="project" value="UniProtKB-SubCell"/>
</dbReference>
<dbReference type="GO" id="GO:0003677">
    <property type="term" value="F:DNA binding"/>
    <property type="evidence" value="ECO:0007669"/>
    <property type="project" value="UniProtKB-KW"/>
</dbReference>
<dbReference type="Gene3D" id="2.40.330.10">
    <property type="entry name" value="DNA-binding pseudobarrel domain"/>
    <property type="match status" value="1"/>
</dbReference>
<dbReference type="InterPro" id="IPR005508">
    <property type="entry name" value="At2g31720-like"/>
</dbReference>
<dbReference type="InterPro" id="IPR015300">
    <property type="entry name" value="DNA-bd_pseudobarrel_sf"/>
</dbReference>
<dbReference type="PANTHER" id="PTHR31541">
    <property type="entry name" value="B3 DOMAIN PLANT PROTEIN-RELATED"/>
    <property type="match status" value="1"/>
</dbReference>
<dbReference type="PANTHER" id="PTHR31541:SF61">
    <property type="entry name" value="TF-B3 DOMAIN-CONTAINING PROTEIN"/>
    <property type="match status" value="1"/>
</dbReference>
<dbReference type="SUPFAM" id="SSF101936">
    <property type="entry name" value="DNA-binding pseudobarrel domain"/>
    <property type="match status" value="1"/>
</dbReference>
<protein>
    <recommendedName>
        <fullName>B3 domain-containing protein At2g31862</fullName>
    </recommendedName>
</protein>